<name>AROQ_YERPY</name>
<comment type="function">
    <text evidence="1">Catalyzes a trans-dehydration via an enolate intermediate.</text>
</comment>
<comment type="catalytic activity">
    <reaction evidence="1">
        <text>3-dehydroquinate = 3-dehydroshikimate + H2O</text>
        <dbReference type="Rhea" id="RHEA:21096"/>
        <dbReference type="ChEBI" id="CHEBI:15377"/>
        <dbReference type="ChEBI" id="CHEBI:16630"/>
        <dbReference type="ChEBI" id="CHEBI:32364"/>
        <dbReference type="EC" id="4.2.1.10"/>
    </reaction>
</comment>
<comment type="pathway">
    <text evidence="1">Metabolic intermediate biosynthesis; chorismate biosynthesis; chorismate from D-erythrose 4-phosphate and phosphoenolpyruvate: step 3/7.</text>
</comment>
<comment type="subunit">
    <text evidence="1">Homododecamer.</text>
</comment>
<comment type="similarity">
    <text evidence="1">Belongs to the type-II 3-dehydroquinase family.</text>
</comment>
<sequence length="150" mass="16395">MSDKFHILLLNGPNLNLLGTREPEKYGYTTLAEIVSQLEIQAQGMDVALSHLQSNAEHALIDSIHQARGNTDFILINPAAFTHTSVALRDALLGVQIPFIEIHLSNVHAREPFRHHSYLSDIAVGVICGLGADGYNFALQAAVNRLSKSN</sequence>
<evidence type="ECO:0000255" key="1">
    <source>
        <dbReference type="HAMAP-Rule" id="MF_00169"/>
    </source>
</evidence>
<gene>
    <name evidence="1" type="primary">aroQ</name>
    <name type="ordered locus">YPK_0460</name>
</gene>
<accession>B1JKF8</accession>
<dbReference type="EC" id="4.2.1.10" evidence="1"/>
<dbReference type="EMBL" id="CP000950">
    <property type="protein sequence ID" value="ACA66763.1"/>
    <property type="molecule type" value="Genomic_DNA"/>
</dbReference>
<dbReference type="RefSeq" id="WP_002210071.1">
    <property type="nucleotide sequence ID" value="NZ_CP009792.1"/>
</dbReference>
<dbReference type="SMR" id="B1JKF8"/>
<dbReference type="GeneID" id="57975085"/>
<dbReference type="KEGG" id="ypy:YPK_0460"/>
<dbReference type="PATRIC" id="fig|502800.11.peg.1070"/>
<dbReference type="UniPathway" id="UPA00053">
    <property type="reaction ID" value="UER00086"/>
</dbReference>
<dbReference type="GO" id="GO:0003855">
    <property type="term" value="F:3-dehydroquinate dehydratase activity"/>
    <property type="evidence" value="ECO:0007669"/>
    <property type="project" value="UniProtKB-UniRule"/>
</dbReference>
<dbReference type="GO" id="GO:0008652">
    <property type="term" value="P:amino acid biosynthetic process"/>
    <property type="evidence" value="ECO:0007669"/>
    <property type="project" value="UniProtKB-KW"/>
</dbReference>
<dbReference type="GO" id="GO:0009073">
    <property type="term" value="P:aromatic amino acid family biosynthetic process"/>
    <property type="evidence" value="ECO:0007669"/>
    <property type="project" value="UniProtKB-KW"/>
</dbReference>
<dbReference type="GO" id="GO:0009423">
    <property type="term" value="P:chorismate biosynthetic process"/>
    <property type="evidence" value="ECO:0007669"/>
    <property type="project" value="UniProtKB-UniRule"/>
</dbReference>
<dbReference type="GO" id="GO:0019631">
    <property type="term" value="P:quinate catabolic process"/>
    <property type="evidence" value="ECO:0007669"/>
    <property type="project" value="TreeGrafter"/>
</dbReference>
<dbReference type="CDD" id="cd00466">
    <property type="entry name" value="DHQase_II"/>
    <property type="match status" value="1"/>
</dbReference>
<dbReference type="Gene3D" id="3.40.50.9100">
    <property type="entry name" value="Dehydroquinase, class II"/>
    <property type="match status" value="1"/>
</dbReference>
<dbReference type="HAMAP" id="MF_00169">
    <property type="entry name" value="AroQ"/>
    <property type="match status" value="1"/>
</dbReference>
<dbReference type="InterPro" id="IPR001874">
    <property type="entry name" value="DHquinase_II"/>
</dbReference>
<dbReference type="InterPro" id="IPR018509">
    <property type="entry name" value="DHquinase_II_CS"/>
</dbReference>
<dbReference type="InterPro" id="IPR036441">
    <property type="entry name" value="DHquinase_II_sf"/>
</dbReference>
<dbReference type="NCBIfam" id="TIGR01088">
    <property type="entry name" value="aroQ"/>
    <property type="match status" value="1"/>
</dbReference>
<dbReference type="NCBIfam" id="NF003804">
    <property type="entry name" value="PRK05395.1-1"/>
    <property type="match status" value="1"/>
</dbReference>
<dbReference type="NCBIfam" id="NF003805">
    <property type="entry name" value="PRK05395.1-2"/>
    <property type="match status" value="1"/>
</dbReference>
<dbReference type="NCBIfam" id="NF003806">
    <property type="entry name" value="PRK05395.1-3"/>
    <property type="match status" value="1"/>
</dbReference>
<dbReference type="NCBIfam" id="NF003807">
    <property type="entry name" value="PRK05395.1-4"/>
    <property type="match status" value="1"/>
</dbReference>
<dbReference type="PANTHER" id="PTHR21272">
    <property type="entry name" value="CATABOLIC 3-DEHYDROQUINASE"/>
    <property type="match status" value="1"/>
</dbReference>
<dbReference type="PANTHER" id="PTHR21272:SF3">
    <property type="entry name" value="CATABOLIC 3-DEHYDROQUINASE"/>
    <property type="match status" value="1"/>
</dbReference>
<dbReference type="Pfam" id="PF01220">
    <property type="entry name" value="DHquinase_II"/>
    <property type="match status" value="1"/>
</dbReference>
<dbReference type="PIRSF" id="PIRSF001399">
    <property type="entry name" value="DHquinase_II"/>
    <property type="match status" value="1"/>
</dbReference>
<dbReference type="SUPFAM" id="SSF52304">
    <property type="entry name" value="Type II 3-dehydroquinate dehydratase"/>
    <property type="match status" value="1"/>
</dbReference>
<dbReference type="PROSITE" id="PS01029">
    <property type="entry name" value="DEHYDROQUINASE_II"/>
    <property type="match status" value="1"/>
</dbReference>
<keyword id="KW-0028">Amino-acid biosynthesis</keyword>
<keyword id="KW-0057">Aromatic amino acid biosynthesis</keyword>
<keyword id="KW-0456">Lyase</keyword>
<protein>
    <recommendedName>
        <fullName evidence="1">3-dehydroquinate dehydratase</fullName>
        <shortName evidence="1">3-dehydroquinase</shortName>
        <ecNumber evidence="1">4.2.1.10</ecNumber>
    </recommendedName>
    <alternativeName>
        <fullName evidence="1">Type II DHQase</fullName>
    </alternativeName>
</protein>
<organism>
    <name type="scientific">Yersinia pseudotuberculosis serotype O:3 (strain YPIII)</name>
    <dbReference type="NCBI Taxonomy" id="502800"/>
    <lineage>
        <taxon>Bacteria</taxon>
        <taxon>Pseudomonadati</taxon>
        <taxon>Pseudomonadota</taxon>
        <taxon>Gammaproteobacteria</taxon>
        <taxon>Enterobacterales</taxon>
        <taxon>Yersiniaceae</taxon>
        <taxon>Yersinia</taxon>
    </lineage>
</organism>
<reference key="1">
    <citation type="submission" date="2008-02" db="EMBL/GenBank/DDBJ databases">
        <title>Complete sequence of Yersinia pseudotuberculosis YPIII.</title>
        <authorList>
            <consortium name="US DOE Joint Genome Institute"/>
            <person name="Copeland A."/>
            <person name="Lucas S."/>
            <person name="Lapidus A."/>
            <person name="Glavina del Rio T."/>
            <person name="Dalin E."/>
            <person name="Tice H."/>
            <person name="Bruce D."/>
            <person name="Goodwin L."/>
            <person name="Pitluck S."/>
            <person name="Munk A.C."/>
            <person name="Brettin T."/>
            <person name="Detter J.C."/>
            <person name="Han C."/>
            <person name="Tapia R."/>
            <person name="Schmutz J."/>
            <person name="Larimer F."/>
            <person name="Land M."/>
            <person name="Hauser L."/>
            <person name="Challacombe J.F."/>
            <person name="Green L."/>
            <person name="Lindler L.E."/>
            <person name="Nikolich M.P."/>
            <person name="Richardson P."/>
        </authorList>
    </citation>
    <scope>NUCLEOTIDE SEQUENCE [LARGE SCALE GENOMIC DNA]</scope>
    <source>
        <strain>YPIII</strain>
    </source>
</reference>
<proteinExistence type="inferred from homology"/>
<feature type="chain" id="PRO_1000097638" description="3-dehydroquinate dehydratase">
    <location>
        <begin position="1"/>
        <end position="150"/>
    </location>
</feature>
<feature type="active site" description="Proton acceptor" evidence="1">
    <location>
        <position position="26"/>
    </location>
</feature>
<feature type="active site" description="Proton donor" evidence="1">
    <location>
        <position position="103"/>
    </location>
</feature>
<feature type="binding site" evidence="1">
    <location>
        <position position="77"/>
    </location>
    <ligand>
        <name>substrate</name>
    </ligand>
</feature>
<feature type="binding site" evidence="1">
    <location>
        <position position="83"/>
    </location>
    <ligand>
        <name>substrate</name>
    </ligand>
</feature>
<feature type="binding site" evidence="1">
    <location>
        <position position="90"/>
    </location>
    <ligand>
        <name>substrate</name>
    </ligand>
</feature>
<feature type="binding site" evidence="1">
    <location>
        <begin position="104"/>
        <end position="105"/>
    </location>
    <ligand>
        <name>substrate</name>
    </ligand>
</feature>
<feature type="binding site" evidence="1">
    <location>
        <position position="114"/>
    </location>
    <ligand>
        <name>substrate</name>
    </ligand>
</feature>
<feature type="site" description="Transition state stabilizer" evidence="1">
    <location>
        <position position="21"/>
    </location>
</feature>